<keyword id="KW-0963">Cytoplasm</keyword>
<keyword id="KW-0274">FAD</keyword>
<keyword id="KW-0285">Flavoprotein</keyword>
<keyword id="KW-0547">Nucleotide-binding</keyword>
<keyword id="KW-0560">Oxidoreductase</keyword>
<keyword id="KW-0662">Pyridine nucleotide biosynthesis</keyword>
<keyword id="KW-1185">Reference proteome</keyword>
<name>NADB_LISMO</name>
<protein>
    <recommendedName>
        <fullName evidence="1">L-aspartate oxidase</fullName>
        <shortName evidence="1">LASPO</shortName>
        <ecNumber evidence="1">1.4.3.16</ecNumber>
    </recommendedName>
    <alternativeName>
        <fullName>Quinolinate synthase B</fullName>
    </alternativeName>
</protein>
<sequence length="484" mass="53115">MIKERVIIVGSGISGCTAALRLMQDYDVTIITKGYKEESNSMLAQGGVAAAVSKNDTPKKHFSDTFQAGCFHNKVLAVNQLVTHGPMVIQKLIAEGMAFDEQDGELALGLEGAHQLPRILHTGGDQTGKFLTTFLQEKLTDIHWQEQKMAIEIIKQNDSAIGVHCLDKENRLHTYYGEHIILASGGLGQLFPVTTNAATISGDGLALAYRAGAKLTDMEFIQFHPTLLFLNGRCHGLISEAVRGEGAKLIRADGSAIMTDVHPRADLAPRDIVAATLFAEIQDGNEVFLDITAIPNFEKRFPGITANLDAHHIPFRETKRIPVHPGAHFLMGGIRTDLSGKTNIPGLYAIGEVANAGVHGANRLASNSLLETLVFGEKVAEYIRTQKINPIDHPEIPLSNQIQTPHLPDKQLLQEKIWETLGITRKPEKITEFLHWLTDFDYANHTRKTAEISHMLITAKLIAESALKRTESLGAHRILKGVIK</sequence>
<evidence type="ECO:0000250" key="1">
    <source>
        <dbReference type="UniProtKB" id="P10902"/>
    </source>
</evidence>
<evidence type="ECO:0000305" key="2"/>
<dbReference type="EC" id="1.4.3.16" evidence="1"/>
<dbReference type="EMBL" id="AL591982">
    <property type="protein sequence ID" value="CAD00101.1"/>
    <property type="molecule type" value="Genomic_DNA"/>
</dbReference>
<dbReference type="PIR" id="AG1327">
    <property type="entry name" value="AG1327"/>
</dbReference>
<dbReference type="RefSeq" id="NP_465547.1">
    <property type="nucleotide sequence ID" value="NC_003210.1"/>
</dbReference>
<dbReference type="RefSeq" id="WP_010989874.1">
    <property type="nucleotide sequence ID" value="NZ_CP149495.1"/>
</dbReference>
<dbReference type="SMR" id="Q8Y5N4"/>
<dbReference type="STRING" id="169963.gene:17594708"/>
<dbReference type="PaxDb" id="169963-lmo2023"/>
<dbReference type="EnsemblBacteria" id="CAD00101">
    <property type="protein sequence ID" value="CAD00101"/>
    <property type="gene ID" value="CAD00101"/>
</dbReference>
<dbReference type="GeneID" id="986699"/>
<dbReference type="KEGG" id="lmo:lmo2023"/>
<dbReference type="PATRIC" id="fig|169963.11.peg.2071"/>
<dbReference type="eggNOG" id="COG0029">
    <property type="taxonomic scope" value="Bacteria"/>
</dbReference>
<dbReference type="HOGENOM" id="CLU_014312_3_2_9"/>
<dbReference type="OrthoDB" id="9806724at2"/>
<dbReference type="PhylomeDB" id="Q8Y5N4"/>
<dbReference type="BioCyc" id="LMON169963:LMO2023-MONOMER"/>
<dbReference type="UniPathway" id="UPA00253">
    <property type="reaction ID" value="UER00326"/>
</dbReference>
<dbReference type="Proteomes" id="UP000000817">
    <property type="component" value="Chromosome"/>
</dbReference>
<dbReference type="GO" id="GO:0005737">
    <property type="term" value="C:cytoplasm"/>
    <property type="evidence" value="ECO:0007669"/>
    <property type="project" value="UniProtKB-SubCell"/>
</dbReference>
<dbReference type="GO" id="GO:0008734">
    <property type="term" value="F:L-aspartate oxidase activity"/>
    <property type="evidence" value="ECO:0000318"/>
    <property type="project" value="GO_Central"/>
</dbReference>
<dbReference type="GO" id="GO:0000166">
    <property type="term" value="F:nucleotide binding"/>
    <property type="evidence" value="ECO:0007669"/>
    <property type="project" value="UniProtKB-KW"/>
</dbReference>
<dbReference type="GO" id="GO:0033765">
    <property type="term" value="F:steroid dehydrogenase activity, acting on the CH-CH group of donors"/>
    <property type="evidence" value="ECO:0007669"/>
    <property type="project" value="UniProtKB-ARBA"/>
</dbReference>
<dbReference type="GO" id="GO:0034628">
    <property type="term" value="P:'de novo' NAD biosynthetic process from L-aspartate"/>
    <property type="evidence" value="ECO:0000318"/>
    <property type="project" value="GO_Central"/>
</dbReference>
<dbReference type="FunFam" id="3.90.700.10:FF:000002">
    <property type="entry name" value="L-aspartate oxidase"/>
    <property type="match status" value="1"/>
</dbReference>
<dbReference type="Gene3D" id="3.50.50.60">
    <property type="entry name" value="FAD/NAD(P)-binding domain"/>
    <property type="match status" value="1"/>
</dbReference>
<dbReference type="Gene3D" id="1.20.58.100">
    <property type="entry name" value="Fumarate reductase/succinate dehydrogenase flavoprotein-like, C-terminal domain"/>
    <property type="match status" value="1"/>
</dbReference>
<dbReference type="Gene3D" id="3.90.700.10">
    <property type="entry name" value="Succinate dehydrogenase/fumarate reductase flavoprotein, catalytic domain"/>
    <property type="match status" value="1"/>
</dbReference>
<dbReference type="InterPro" id="IPR003953">
    <property type="entry name" value="FAD-dep_OxRdtase_2_FAD-bd"/>
</dbReference>
<dbReference type="InterPro" id="IPR036188">
    <property type="entry name" value="FAD/NAD-bd_sf"/>
</dbReference>
<dbReference type="InterPro" id="IPR037099">
    <property type="entry name" value="Fum_R/Succ_DH_flav-like_C_sf"/>
</dbReference>
<dbReference type="InterPro" id="IPR015939">
    <property type="entry name" value="Fum_Rdtase/Succ_DH_flav-like_C"/>
</dbReference>
<dbReference type="InterPro" id="IPR005288">
    <property type="entry name" value="NadB"/>
</dbReference>
<dbReference type="InterPro" id="IPR027477">
    <property type="entry name" value="Succ_DH/fumarate_Rdtase_cat_sf"/>
</dbReference>
<dbReference type="NCBIfam" id="TIGR00551">
    <property type="entry name" value="nadB"/>
    <property type="match status" value="1"/>
</dbReference>
<dbReference type="NCBIfam" id="NF005978">
    <property type="entry name" value="PRK08071.1"/>
    <property type="match status" value="1"/>
</dbReference>
<dbReference type="PANTHER" id="PTHR42716">
    <property type="entry name" value="L-ASPARTATE OXIDASE"/>
    <property type="match status" value="1"/>
</dbReference>
<dbReference type="PANTHER" id="PTHR42716:SF2">
    <property type="entry name" value="L-ASPARTATE OXIDASE, CHLOROPLASTIC"/>
    <property type="match status" value="1"/>
</dbReference>
<dbReference type="Pfam" id="PF00890">
    <property type="entry name" value="FAD_binding_2"/>
    <property type="match status" value="1"/>
</dbReference>
<dbReference type="Pfam" id="PF02910">
    <property type="entry name" value="Succ_DH_flav_C"/>
    <property type="match status" value="1"/>
</dbReference>
<dbReference type="PRINTS" id="PR00368">
    <property type="entry name" value="FADPNR"/>
</dbReference>
<dbReference type="SUPFAM" id="SSF51905">
    <property type="entry name" value="FAD/NAD(P)-binding domain"/>
    <property type="match status" value="1"/>
</dbReference>
<dbReference type="SUPFAM" id="SSF46977">
    <property type="entry name" value="Succinate dehydrogenase/fumarate reductase flavoprotein C-terminal domain"/>
    <property type="match status" value="1"/>
</dbReference>
<dbReference type="SUPFAM" id="SSF56425">
    <property type="entry name" value="Succinate dehydrogenase/fumarate reductase flavoprotein, catalytic domain"/>
    <property type="match status" value="1"/>
</dbReference>
<accession>Q8Y5N4</accession>
<feature type="chain" id="PRO_0000184387" description="L-aspartate oxidase">
    <location>
        <begin position="1"/>
        <end position="484"/>
    </location>
</feature>
<feature type="active site" description="Proton donor/acceptor" evidence="1">
    <location>
        <position position="270"/>
    </location>
</feature>
<feature type="binding site" evidence="1">
    <location>
        <begin position="11"/>
        <end position="14"/>
    </location>
    <ligand>
        <name>FAD</name>
        <dbReference type="ChEBI" id="CHEBI:57692"/>
    </ligand>
</feature>
<feature type="binding site" evidence="1">
    <location>
        <position position="33"/>
    </location>
    <ligand>
        <name>FAD</name>
        <dbReference type="ChEBI" id="CHEBI:57692"/>
    </ligand>
</feature>
<feature type="binding site" evidence="1">
    <location>
        <begin position="40"/>
        <end position="47"/>
    </location>
    <ligand>
        <name>FAD</name>
        <dbReference type="ChEBI" id="CHEBI:57692"/>
    </ligand>
</feature>
<feature type="binding site" evidence="1">
    <location>
        <position position="203"/>
    </location>
    <ligand>
        <name>FAD</name>
        <dbReference type="ChEBI" id="CHEBI:57692"/>
    </ligand>
</feature>
<feature type="binding site" evidence="1">
    <location>
        <position position="352"/>
    </location>
    <ligand>
        <name>FAD</name>
        <dbReference type="ChEBI" id="CHEBI:57692"/>
    </ligand>
</feature>
<feature type="binding site" evidence="1">
    <location>
        <begin position="368"/>
        <end position="369"/>
    </location>
    <ligand>
        <name>FAD</name>
        <dbReference type="ChEBI" id="CHEBI:57692"/>
    </ligand>
</feature>
<feature type="site" description="Important in orienting the L-aspartate substrate" evidence="1">
    <location>
        <position position="111"/>
    </location>
</feature>
<organism>
    <name type="scientific">Listeria monocytogenes serovar 1/2a (strain ATCC BAA-679 / EGD-e)</name>
    <dbReference type="NCBI Taxonomy" id="169963"/>
    <lineage>
        <taxon>Bacteria</taxon>
        <taxon>Bacillati</taxon>
        <taxon>Bacillota</taxon>
        <taxon>Bacilli</taxon>
        <taxon>Bacillales</taxon>
        <taxon>Listeriaceae</taxon>
        <taxon>Listeria</taxon>
    </lineage>
</organism>
<reference key="1">
    <citation type="journal article" date="2001" name="Science">
        <title>Comparative genomics of Listeria species.</title>
        <authorList>
            <person name="Glaser P."/>
            <person name="Frangeul L."/>
            <person name="Buchrieser C."/>
            <person name="Rusniok C."/>
            <person name="Amend A."/>
            <person name="Baquero F."/>
            <person name="Berche P."/>
            <person name="Bloecker H."/>
            <person name="Brandt P."/>
            <person name="Chakraborty T."/>
            <person name="Charbit A."/>
            <person name="Chetouani F."/>
            <person name="Couve E."/>
            <person name="de Daruvar A."/>
            <person name="Dehoux P."/>
            <person name="Domann E."/>
            <person name="Dominguez-Bernal G."/>
            <person name="Duchaud E."/>
            <person name="Durant L."/>
            <person name="Dussurget O."/>
            <person name="Entian K.-D."/>
            <person name="Fsihi H."/>
            <person name="Garcia-del Portillo F."/>
            <person name="Garrido P."/>
            <person name="Gautier L."/>
            <person name="Goebel W."/>
            <person name="Gomez-Lopez N."/>
            <person name="Hain T."/>
            <person name="Hauf J."/>
            <person name="Jackson D."/>
            <person name="Jones L.-M."/>
            <person name="Kaerst U."/>
            <person name="Kreft J."/>
            <person name="Kuhn M."/>
            <person name="Kunst F."/>
            <person name="Kurapkat G."/>
            <person name="Madueno E."/>
            <person name="Maitournam A."/>
            <person name="Mata Vicente J."/>
            <person name="Ng E."/>
            <person name="Nedjari H."/>
            <person name="Nordsiek G."/>
            <person name="Novella S."/>
            <person name="de Pablos B."/>
            <person name="Perez-Diaz J.-C."/>
            <person name="Purcell R."/>
            <person name="Remmel B."/>
            <person name="Rose M."/>
            <person name="Schlueter T."/>
            <person name="Simoes N."/>
            <person name="Tierrez A."/>
            <person name="Vazquez-Boland J.-A."/>
            <person name="Voss H."/>
            <person name="Wehland J."/>
            <person name="Cossart P."/>
        </authorList>
    </citation>
    <scope>NUCLEOTIDE SEQUENCE [LARGE SCALE GENOMIC DNA]</scope>
    <source>
        <strain>ATCC BAA-679 / EGD-e</strain>
    </source>
</reference>
<gene>
    <name type="primary">nadB</name>
    <name type="ordered locus">lmo2023</name>
</gene>
<comment type="function">
    <text evidence="1">Catalyzes the oxidation of L-aspartate to iminoaspartate, the first step in the de novo biosynthesis of NAD(+).</text>
</comment>
<comment type="catalytic activity">
    <reaction evidence="1">
        <text>L-aspartate + O2 = iminosuccinate + H2O2</text>
        <dbReference type="Rhea" id="RHEA:25876"/>
        <dbReference type="ChEBI" id="CHEBI:15379"/>
        <dbReference type="ChEBI" id="CHEBI:16240"/>
        <dbReference type="ChEBI" id="CHEBI:29991"/>
        <dbReference type="ChEBI" id="CHEBI:77875"/>
        <dbReference type="EC" id="1.4.3.16"/>
    </reaction>
    <physiologicalReaction direction="left-to-right" evidence="1">
        <dbReference type="Rhea" id="RHEA:25877"/>
    </physiologicalReaction>
</comment>
<comment type="cofactor">
    <cofactor evidence="1">
        <name>FAD</name>
        <dbReference type="ChEBI" id="CHEBI:57692"/>
    </cofactor>
    <text evidence="1">Binds 1 FAD per subunit.</text>
</comment>
<comment type="pathway">
    <text evidence="1">Cofactor biosynthesis; NAD(+) biosynthesis; iminoaspartate from L-aspartate (oxidase route): step 1/1.</text>
</comment>
<comment type="subcellular location">
    <subcellularLocation>
        <location evidence="1">Cytoplasm</location>
    </subcellularLocation>
</comment>
<comment type="similarity">
    <text evidence="2">Belongs to the FAD-dependent oxidoreductase 2 family. NadB subfamily.</text>
</comment>
<proteinExistence type="inferred from homology"/>